<name>PSBL_HYDCA</name>
<reference key="1">
    <citation type="journal article" date="2003" name="Mol. Phylogenet. Evol.">
        <title>Inference of higher-order relationships in the cycads from a large chloroplast data set.</title>
        <authorList>
            <person name="Rai H.S."/>
            <person name="O'Brien H.E."/>
            <person name="Reeves P.A."/>
            <person name="Olmstead R.G."/>
            <person name="Graham S.W."/>
        </authorList>
    </citation>
    <scope>NUCLEOTIDE SEQUENCE [GENOMIC DNA]</scope>
</reference>
<comment type="function">
    <text evidence="1">One of the components of the core complex of photosystem II (PSII). PSII is a light-driven water:plastoquinone oxidoreductase that uses light energy to abstract electrons from H(2)O, generating O(2) and a proton gradient subsequently used for ATP formation. It consists of a core antenna complex that captures photons, and an electron transfer chain that converts photonic excitation into a charge separation. This subunit is found at the monomer-monomer interface and is required for correct PSII assembly and/or dimerization.</text>
</comment>
<comment type="subunit">
    <text evidence="1">PSII is composed of 1 copy each of membrane proteins PsbA, PsbB, PsbC, PsbD, PsbE, PsbF, PsbH, PsbI, PsbJ, PsbK, PsbL, PsbM, PsbT, PsbX, PsbY, PsbZ, Psb30/Ycf12, at least 3 peripheral proteins of the oxygen-evolving complex and a large number of cofactors. It forms dimeric complexes.</text>
</comment>
<comment type="subcellular location">
    <subcellularLocation>
        <location evidence="1">Plastid</location>
        <location evidence="1">Chloroplast thylakoid membrane</location>
        <topology evidence="1">Single-pass membrane protein</topology>
    </subcellularLocation>
</comment>
<comment type="similarity">
    <text evidence="1">Belongs to the PsbL family.</text>
</comment>
<accession>Q7HIU9</accession>
<feature type="chain" id="PRO_0000219723" description="Photosystem II reaction center protein L">
    <location>
        <begin position="1"/>
        <end position="38"/>
    </location>
</feature>
<feature type="transmembrane region" description="Helical" evidence="1">
    <location>
        <begin position="17"/>
        <end position="37"/>
    </location>
</feature>
<sequence length="38" mass="4497">MTQSNPNEQNVELNRTSLYWGLLLIFVLAVLFSNYFFN</sequence>
<keyword id="KW-0150">Chloroplast</keyword>
<keyword id="KW-0472">Membrane</keyword>
<keyword id="KW-0602">Photosynthesis</keyword>
<keyword id="KW-0604">Photosystem II</keyword>
<keyword id="KW-0934">Plastid</keyword>
<keyword id="KW-0674">Reaction center</keyword>
<keyword id="KW-0793">Thylakoid</keyword>
<keyword id="KW-0812">Transmembrane</keyword>
<keyword id="KW-1133">Transmembrane helix</keyword>
<geneLocation type="chloroplast"/>
<protein>
    <recommendedName>
        <fullName evidence="1">Photosystem II reaction center protein L</fullName>
        <shortName evidence="1">PSII-L</shortName>
    </recommendedName>
</protein>
<gene>
    <name evidence="1" type="primary">psbL</name>
</gene>
<dbReference type="EMBL" id="AY007479">
    <property type="protein sequence ID" value="AAG27000.1"/>
    <property type="molecule type" value="Genomic_DNA"/>
</dbReference>
<dbReference type="RefSeq" id="YP_009366855.1">
    <property type="nucleotide sequence ID" value="NC_034702.1"/>
</dbReference>
<dbReference type="SMR" id="Q7HIU9"/>
<dbReference type="GeneID" id="32883756"/>
<dbReference type="GO" id="GO:0009535">
    <property type="term" value="C:chloroplast thylakoid membrane"/>
    <property type="evidence" value="ECO:0007669"/>
    <property type="project" value="UniProtKB-SubCell"/>
</dbReference>
<dbReference type="GO" id="GO:0009539">
    <property type="term" value="C:photosystem II reaction center"/>
    <property type="evidence" value="ECO:0007669"/>
    <property type="project" value="InterPro"/>
</dbReference>
<dbReference type="GO" id="GO:0015979">
    <property type="term" value="P:photosynthesis"/>
    <property type="evidence" value="ECO:0007669"/>
    <property type="project" value="UniProtKB-UniRule"/>
</dbReference>
<dbReference type="HAMAP" id="MF_01317">
    <property type="entry name" value="PSII_PsbL"/>
    <property type="match status" value="1"/>
</dbReference>
<dbReference type="InterPro" id="IPR003372">
    <property type="entry name" value="PSII_PsbL"/>
</dbReference>
<dbReference type="InterPro" id="IPR037266">
    <property type="entry name" value="PSII_PsbL_sf"/>
</dbReference>
<dbReference type="NCBIfam" id="NF001972">
    <property type="entry name" value="PRK00753.1"/>
    <property type="match status" value="1"/>
</dbReference>
<dbReference type="Pfam" id="PF02419">
    <property type="entry name" value="PsbL"/>
    <property type="match status" value="1"/>
</dbReference>
<dbReference type="SUPFAM" id="SSF161017">
    <property type="entry name" value="Photosystem II reaction center protein L, PsbL"/>
    <property type="match status" value="1"/>
</dbReference>
<organism>
    <name type="scientific">Hydrastis canadensis</name>
    <name type="common">Goldenseal</name>
    <dbReference type="NCBI Taxonomy" id="13569"/>
    <lineage>
        <taxon>Eukaryota</taxon>
        <taxon>Viridiplantae</taxon>
        <taxon>Streptophyta</taxon>
        <taxon>Embryophyta</taxon>
        <taxon>Tracheophyta</taxon>
        <taxon>Spermatophyta</taxon>
        <taxon>Magnoliopsida</taxon>
        <taxon>Ranunculales</taxon>
        <taxon>Ranunculaceae</taxon>
        <taxon>Hydrastidoideae</taxon>
        <taxon>Hydrastis</taxon>
    </lineage>
</organism>
<proteinExistence type="inferred from homology"/>
<evidence type="ECO:0000255" key="1">
    <source>
        <dbReference type="HAMAP-Rule" id="MF_01317"/>
    </source>
</evidence>